<dbReference type="EC" id="3.4.11.18" evidence="1"/>
<dbReference type="EMBL" id="GG657467">
    <property type="protein sequence ID" value="OAT12429.1"/>
    <property type="molecule type" value="Genomic_DNA"/>
</dbReference>
<dbReference type="RefSeq" id="XP_031580370.1">
    <property type="nucleotide sequence ID" value="XM_031723244.1"/>
</dbReference>
<dbReference type="SMR" id="C5JYZ5"/>
<dbReference type="STRING" id="559298.C5JYZ5"/>
<dbReference type="GeneID" id="8502192"/>
<dbReference type="VEuPathDB" id="FungiDB:BDBG_07768"/>
<dbReference type="HOGENOM" id="CLU_015857_7_1_1"/>
<dbReference type="OrthoDB" id="7848262at2759"/>
<dbReference type="Proteomes" id="UP000002038">
    <property type="component" value="Unassembled WGS sequence"/>
</dbReference>
<dbReference type="GO" id="GO:0005737">
    <property type="term" value="C:cytoplasm"/>
    <property type="evidence" value="ECO:0007669"/>
    <property type="project" value="UniProtKB-SubCell"/>
</dbReference>
<dbReference type="GO" id="GO:0004239">
    <property type="term" value="F:initiator methionyl aminopeptidase activity"/>
    <property type="evidence" value="ECO:0007669"/>
    <property type="project" value="UniProtKB-UniRule"/>
</dbReference>
<dbReference type="GO" id="GO:0046872">
    <property type="term" value="F:metal ion binding"/>
    <property type="evidence" value="ECO:0007669"/>
    <property type="project" value="UniProtKB-UniRule"/>
</dbReference>
<dbReference type="GO" id="GO:0070006">
    <property type="term" value="F:metalloaminopeptidase activity"/>
    <property type="evidence" value="ECO:0007669"/>
    <property type="project" value="UniProtKB-UniRule"/>
</dbReference>
<dbReference type="GO" id="GO:0006508">
    <property type="term" value="P:proteolysis"/>
    <property type="evidence" value="ECO:0007669"/>
    <property type="project" value="UniProtKB-KW"/>
</dbReference>
<dbReference type="CDD" id="cd01088">
    <property type="entry name" value="MetAP2"/>
    <property type="match status" value="1"/>
</dbReference>
<dbReference type="Gene3D" id="3.90.230.10">
    <property type="entry name" value="Creatinase/methionine aminopeptidase superfamily"/>
    <property type="match status" value="1"/>
</dbReference>
<dbReference type="Gene3D" id="1.10.10.10">
    <property type="entry name" value="Winged helix-like DNA-binding domain superfamily/Winged helix DNA-binding domain"/>
    <property type="match status" value="1"/>
</dbReference>
<dbReference type="HAMAP" id="MF_03175">
    <property type="entry name" value="MetAP_2_euk"/>
    <property type="match status" value="1"/>
</dbReference>
<dbReference type="InterPro" id="IPR036005">
    <property type="entry name" value="Creatinase/aminopeptidase-like"/>
</dbReference>
<dbReference type="InterPro" id="IPR050247">
    <property type="entry name" value="Met_Aminopeptidase_Type2"/>
</dbReference>
<dbReference type="InterPro" id="IPR000994">
    <property type="entry name" value="Pept_M24"/>
</dbReference>
<dbReference type="InterPro" id="IPR001714">
    <property type="entry name" value="Pept_M24_MAP"/>
</dbReference>
<dbReference type="InterPro" id="IPR002468">
    <property type="entry name" value="Pept_M24A_MAP2"/>
</dbReference>
<dbReference type="InterPro" id="IPR018349">
    <property type="entry name" value="Pept_M24A_MAP2_BS"/>
</dbReference>
<dbReference type="InterPro" id="IPR036388">
    <property type="entry name" value="WH-like_DNA-bd_sf"/>
</dbReference>
<dbReference type="InterPro" id="IPR036390">
    <property type="entry name" value="WH_DNA-bd_sf"/>
</dbReference>
<dbReference type="NCBIfam" id="TIGR00501">
    <property type="entry name" value="met_pdase_II"/>
    <property type="match status" value="1"/>
</dbReference>
<dbReference type="PANTHER" id="PTHR45777">
    <property type="entry name" value="METHIONINE AMINOPEPTIDASE 2"/>
    <property type="match status" value="1"/>
</dbReference>
<dbReference type="PANTHER" id="PTHR45777:SF1">
    <property type="entry name" value="METHIONINE AMINOPEPTIDASE 2-2"/>
    <property type="match status" value="1"/>
</dbReference>
<dbReference type="Pfam" id="PF00557">
    <property type="entry name" value="Peptidase_M24"/>
    <property type="match status" value="1"/>
</dbReference>
<dbReference type="PRINTS" id="PR00599">
    <property type="entry name" value="MAPEPTIDASE"/>
</dbReference>
<dbReference type="SUPFAM" id="SSF55920">
    <property type="entry name" value="Creatinase/aminopeptidase"/>
    <property type="match status" value="1"/>
</dbReference>
<dbReference type="SUPFAM" id="SSF46785">
    <property type="entry name" value="Winged helix' DNA-binding domain"/>
    <property type="match status" value="1"/>
</dbReference>
<dbReference type="PROSITE" id="PS01202">
    <property type="entry name" value="MAP_2"/>
    <property type="match status" value="1"/>
</dbReference>
<protein>
    <recommendedName>
        <fullName evidence="1">Methionine aminopeptidase 2-2</fullName>
        <shortName evidence="1">MAP 2-2</shortName>
        <shortName evidence="1">MetAP 2-2</shortName>
        <ecNumber evidence="1">3.4.11.18</ecNumber>
    </recommendedName>
    <alternativeName>
        <fullName evidence="1">Peptidase M</fullName>
    </alternativeName>
</protein>
<keyword id="KW-0031">Aminopeptidase</keyword>
<keyword id="KW-0963">Cytoplasm</keyword>
<keyword id="KW-0378">Hydrolase</keyword>
<keyword id="KW-0479">Metal-binding</keyword>
<keyword id="KW-0645">Protease</keyword>
<keyword id="KW-1185">Reference proteome</keyword>
<gene>
    <name type="ORF">BDBG_07768</name>
</gene>
<proteinExistence type="inferred from homology"/>
<accession>C5JYZ5</accession>
<accession>A0A179UYY4</accession>
<sequence length="465" mass="51512">MGSKTPNDHRRGPNVESSPHAAIDTINPPKHAAASGLLHGPLEGETEDGEDEDDDKTGADLKSVGQLNNSTKKKNKRKKNKKKKKTLLGGLQTTPPRVALSSIFYNQRYPEAEIVGYTTNNDNLQRITAEEFRHLCVVNDMDDEFLNDYRKAAEVHRQVRQYVQTITKPGIAMSQLAQEIEDGVRALTDHQGIETGDALKAGMAFPTGLCLNNIGAHWTPNPGAKEVILQYDDVLKVDFGVHVNGRIVDSAYTMAFNPVYDDLLTAVKAATNTGLKEAGIDARIDCISEAIQEVMESYEVELNRKIIPVKAVRNITGHNILRYKIHGDKQVPFVKTHTNQRMEEGDIFAIETFGSTGKAYLDDDIGIYGYFCDEHASAAGLHHSSAKSLLKTIKDNFGTLVFSRRYLERLGVKSYHLGMRSLVSKGIVQSYAPLVDVPGSYVAQFEHTVLLRPNCKEVISRGDDY</sequence>
<reference key="1">
    <citation type="journal article" date="2015" name="PLoS Genet.">
        <title>The dynamic genome and transcriptome of the human fungal pathogen Blastomyces and close relative Emmonsia.</title>
        <authorList>
            <person name="Munoz J.F."/>
            <person name="Gauthier G.M."/>
            <person name="Desjardins C.A."/>
            <person name="Gallo J.E."/>
            <person name="Holder J."/>
            <person name="Sullivan T.D."/>
            <person name="Marty A.J."/>
            <person name="Carmen J.C."/>
            <person name="Chen Z."/>
            <person name="Ding L."/>
            <person name="Gujja S."/>
            <person name="Magrini V."/>
            <person name="Misas E."/>
            <person name="Mitreva M."/>
            <person name="Priest M."/>
            <person name="Saif S."/>
            <person name="Whiston E.A."/>
            <person name="Young S."/>
            <person name="Zeng Q."/>
            <person name="Goldman W.E."/>
            <person name="Mardis E.R."/>
            <person name="Taylor J.W."/>
            <person name="McEwen J.G."/>
            <person name="Clay O.K."/>
            <person name="Klein B.S."/>
            <person name="Cuomo C.A."/>
        </authorList>
    </citation>
    <scope>NUCLEOTIDE SEQUENCE [LARGE SCALE GENOMIC DNA]</scope>
    <source>
        <strain>SLH14081</strain>
    </source>
</reference>
<feature type="chain" id="PRO_0000407617" description="Methionine aminopeptidase 2-2">
    <location>
        <begin position="1"/>
        <end position="465"/>
    </location>
</feature>
<feature type="region of interest" description="Disordered" evidence="2">
    <location>
        <begin position="1"/>
        <end position="92"/>
    </location>
</feature>
<feature type="compositionally biased region" description="Basic and acidic residues" evidence="2">
    <location>
        <begin position="1"/>
        <end position="13"/>
    </location>
</feature>
<feature type="compositionally biased region" description="Acidic residues" evidence="2">
    <location>
        <begin position="44"/>
        <end position="55"/>
    </location>
</feature>
<feature type="compositionally biased region" description="Basic residues" evidence="2">
    <location>
        <begin position="71"/>
        <end position="86"/>
    </location>
</feature>
<feature type="binding site" evidence="1">
    <location>
        <position position="217"/>
    </location>
    <ligand>
        <name>substrate</name>
    </ligand>
</feature>
<feature type="binding site" evidence="1">
    <location>
        <position position="238"/>
    </location>
    <ligand>
        <name>a divalent metal cation</name>
        <dbReference type="ChEBI" id="CHEBI:60240"/>
        <label>1</label>
    </ligand>
</feature>
<feature type="binding site" evidence="1">
    <location>
        <position position="249"/>
    </location>
    <ligand>
        <name>a divalent metal cation</name>
        <dbReference type="ChEBI" id="CHEBI:60240"/>
        <label>1</label>
    </ligand>
</feature>
<feature type="binding site" evidence="1">
    <location>
        <position position="249"/>
    </location>
    <ligand>
        <name>a divalent metal cation</name>
        <dbReference type="ChEBI" id="CHEBI:60240"/>
        <label>2</label>
        <note>catalytic</note>
    </ligand>
</feature>
<feature type="binding site" evidence="1">
    <location>
        <position position="318"/>
    </location>
    <ligand>
        <name>a divalent metal cation</name>
        <dbReference type="ChEBI" id="CHEBI:60240"/>
        <label>2</label>
        <note>catalytic</note>
    </ligand>
</feature>
<feature type="binding site" evidence="1">
    <location>
        <position position="326"/>
    </location>
    <ligand>
        <name>substrate</name>
    </ligand>
</feature>
<feature type="binding site" evidence="1">
    <location>
        <position position="351"/>
    </location>
    <ligand>
        <name>a divalent metal cation</name>
        <dbReference type="ChEBI" id="CHEBI:60240"/>
        <label>2</label>
        <note>catalytic</note>
    </ligand>
</feature>
<feature type="binding site" evidence="1">
    <location>
        <position position="446"/>
    </location>
    <ligand>
        <name>a divalent metal cation</name>
        <dbReference type="ChEBI" id="CHEBI:60240"/>
        <label>1</label>
    </ligand>
</feature>
<feature type="binding site" evidence="1">
    <location>
        <position position="446"/>
    </location>
    <ligand>
        <name>a divalent metal cation</name>
        <dbReference type="ChEBI" id="CHEBI:60240"/>
        <label>2</label>
        <note>catalytic</note>
    </ligand>
</feature>
<name>MAP22_BLAGS</name>
<comment type="function">
    <text evidence="1">Cotranslationally removes the N-terminal methionine from nascent proteins. The N-terminal methionine is often cleaved when the second residue in the primary sequence is small and uncharged (Met-Ala-, Cys, Gly, Pro, Ser, Thr, or Val).</text>
</comment>
<comment type="catalytic activity">
    <reaction evidence="1">
        <text>Release of N-terminal amino acids, preferentially methionine, from peptides and arylamides.</text>
        <dbReference type="EC" id="3.4.11.18"/>
    </reaction>
</comment>
<comment type="cofactor">
    <cofactor evidence="1">
        <name>Co(2+)</name>
        <dbReference type="ChEBI" id="CHEBI:48828"/>
    </cofactor>
    <cofactor evidence="1">
        <name>Zn(2+)</name>
        <dbReference type="ChEBI" id="CHEBI:29105"/>
    </cofactor>
    <cofactor evidence="1">
        <name>Mn(2+)</name>
        <dbReference type="ChEBI" id="CHEBI:29035"/>
    </cofactor>
    <cofactor evidence="1">
        <name>Fe(2+)</name>
        <dbReference type="ChEBI" id="CHEBI:29033"/>
    </cofactor>
    <text evidence="1">Binds 2 divalent metal cations per subunit. Has a high-affinity and a low affinity metal-binding site. The true nature of the physiological cofactor is under debate. The enzyme is active with cobalt, zinc, manganese or divalent iron ions. Most likely, methionine aminopeptidases function as mononuclear Fe(2+)-metalloproteases under physiological conditions, and the catalytically relevant metal-binding site has been assigned to the histidine-containing high-affinity site.</text>
</comment>
<comment type="subcellular location">
    <subcellularLocation>
        <location evidence="1">Cytoplasm</location>
    </subcellularLocation>
</comment>
<comment type="similarity">
    <text evidence="1">Belongs to the peptidase M24A family. Methionine aminopeptidase eukaryotic type 2 subfamily.</text>
</comment>
<evidence type="ECO:0000255" key="1">
    <source>
        <dbReference type="HAMAP-Rule" id="MF_03175"/>
    </source>
</evidence>
<evidence type="ECO:0000256" key="2">
    <source>
        <dbReference type="SAM" id="MobiDB-lite"/>
    </source>
</evidence>
<organism>
    <name type="scientific">Blastomyces gilchristii (strain SLH14081)</name>
    <name type="common">Blastomyces dermatitidis</name>
    <dbReference type="NCBI Taxonomy" id="559298"/>
    <lineage>
        <taxon>Eukaryota</taxon>
        <taxon>Fungi</taxon>
        <taxon>Dikarya</taxon>
        <taxon>Ascomycota</taxon>
        <taxon>Pezizomycotina</taxon>
        <taxon>Eurotiomycetes</taxon>
        <taxon>Eurotiomycetidae</taxon>
        <taxon>Onygenales</taxon>
        <taxon>Ajellomycetaceae</taxon>
        <taxon>Blastomyces</taxon>
    </lineage>
</organism>